<keyword id="KW-0903">Direct protein sequencing</keyword>
<keyword id="KW-0964">Secreted</keyword>
<keyword id="KW-0800">Toxin</keyword>
<protein>
    <recommendedName>
        <fullName evidence="3">Short cationic peptide-6d</fullName>
        <shortName evidence="3">SCP-6d</shortName>
    </recommendedName>
    <alternativeName>
        <fullName evidence="2">Short cationic peptide-6j</fullName>
        <shortName evidence="2">SCP-6j</shortName>
    </alternativeName>
    <alternativeName>
        <fullName evidence="3">Truncated variant of Cupiennin 6 family</fullName>
    </alternativeName>
</protein>
<sequence length="12" mass="1621">INKYREWKNKKN</sequence>
<dbReference type="GO" id="GO:0005576">
    <property type="term" value="C:extracellular region"/>
    <property type="evidence" value="ECO:0007669"/>
    <property type="project" value="UniProtKB-SubCell"/>
</dbReference>
<dbReference type="GO" id="GO:0090729">
    <property type="term" value="F:toxin activity"/>
    <property type="evidence" value="ECO:0007669"/>
    <property type="project" value="UniProtKB-KW"/>
</dbReference>
<comment type="subcellular location">
    <subcellularLocation>
        <location evidence="1">Secreted</location>
    </subcellularLocation>
</comment>
<comment type="tissue specificity">
    <text evidence="5">Expressed by the venom gland.</text>
</comment>
<comment type="mass spectrometry" mass="1619.888" method="Electrospray" evidence="1"/>
<comment type="similarity">
    <text evidence="4">Belongs to the cationic peptide 04 (cupiennin) family. 06 subfamily.</text>
</comment>
<feature type="peptide" id="PRO_0000421233" description="Short cationic peptide-6d" evidence="1">
    <location>
        <begin position="1"/>
        <end position="12"/>
    </location>
</feature>
<name>TXS6D_CUPSA</name>
<organism>
    <name type="scientific">Cupiennius salei</name>
    <name type="common">American wandering spider</name>
    <dbReference type="NCBI Taxonomy" id="6928"/>
    <lineage>
        <taxon>Eukaryota</taxon>
        <taxon>Metazoa</taxon>
        <taxon>Ecdysozoa</taxon>
        <taxon>Arthropoda</taxon>
        <taxon>Chelicerata</taxon>
        <taxon>Arachnida</taxon>
        <taxon>Araneae</taxon>
        <taxon>Araneomorphae</taxon>
        <taxon>Entelegynae</taxon>
        <taxon>Lycosoidea</taxon>
        <taxon>Ctenidae</taxon>
        <taxon>Cupiennius</taxon>
    </lineage>
</organism>
<reference key="1">
    <citation type="journal article" date="2012" name="FEBS J.">
        <title>Multicomponent venom of the spider Cupiennius salei: a bioanalytical investigation applying different strategies.</title>
        <authorList>
            <person name="Trachsel C."/>
            <person name="Siegemund D."/>
            <person name="Kampfer U."/>
            <person name="Kopp L.S."/>
            <person name="Buhr C."/>
            <person name="Grossmann J."/>
            <person name="Luthi C."/>
            <person name="Cunningham M."/>
            <person name="Nentwig W."/>
            <person name="Kuhn-Nentwig L."/>
            <person name="Schurch S."/>
            <person name="Schaller J."/>
        </authorList>
    </citation>
    <scope>PROTEIN SEQUENCE</scope>
    <scope>MASS SPECTROMETRY</scope>
    <source>
        <tissue>Venom</tissue>
    </source>
</reference>
<reference key="2">
    <citation type="unpublished observations" date="2015-06">
        <authorList>
            <person name="Kuhn-Nentwig L."/>
            <person name="Gohel T."/>
        </authorList>
    </citation>
    <scope>NOMENCLATURE</scope>
</reference>
<evidence type="ECO:0000269" key="1">
    <source>
    </source>
</evidence>
<evidence type="ECO:0000303" key="2">
    <source>
    </source>
</evidence>
<evidence type="ECO:0000303" key="3">
    <source ref="2"/>
</evidence>
<evidence type="ECO:0000305" key="4"/>
<evidence type="ECO:0000305" key="5">
    <source>
    </source>
</evidence>
<proteinExistence type="evidence at protein level"/>
<accession>B3EWX4</accession>